<gene>
    <name evidence="1" type="primary">trmD</name>
    <name type="ordered locus">MAG6260</name>
</gene>
<keyword id="KW-0963">Cytoplasm</keyword>
<keyword id="KW-0489">Methyltransferase</keyword>
<keyword id="KW-1185">Reference proteome</keyword>
<keyword id="KW-0949">S-adenosyl-L-methionine</keyword>
<keyword id="KW-0808">Transferase</keyword>
<keyword id="KW-0819">tRNA processing</keyword>
<evidence type="ECO:0000255" key="1">
    <source>
        <dbReference type="HAMAP-Rule" id="MF_00605"/>
    </source>
</evidence>
<reference key="1">
    <citation type="journal article" date="2007" name="PLoS Genet.">
        <title>Being pathogenic, plastic, and sexual while living with a nearly minimal bacterial genome.</title>
        <authorList>
            <person name="Sirand-Pugnet P."/>
            <person name="Lartigue C."/>
            <person name="Marenda M."/>
            <person name="Jacob D."/>
            <person name="Barre A."/>
            <person name="Barbe V."/>
            <person name="Schenowitz C."/>
            <person name="Mangenot S."/>
            <person name="Couloux A."/>
            <person name="Segurens B."/>
            <person name="de Daruvar A."/>
            <person name="Blanchard A."/>
            <person name="Citti C."/>
        </authorList>
    </citation>
    <scope>NUCLEOTIDE SEQUENCE [LARGE SCALE GENOMIC DNA]</scope>
    <source>
        <strain>NCTC 10123 / CIP 59.7 / PG2</strain>
    </source>
</reference>
<accession>A5IZ67</accession>
<dbReference type="EC" id="2.1.1.228" evidence="1"/>
<dbReference type="EMBL" id="CU179680">
    <property type="protein sequence ID" value="CAL59326.1"/>
    <property type="molecule type" value="Genomic_DNA"/>
</dbReference>
<dbReference type="RefSeq" id="WP_011949781.1">
    <property type="nucleotide sequence ID" value="NC_009497.1"/>
</dbReference>
<dbReference type="SMR" id="A5IZ67"/>
<dbReference type="STRING" id="347257.MAG6260"/>
<dbReference type="GeneID" id="93358359"/>
<dbReference type="KEGG" id="maa:MAG6260"/>
<dbReference type="HOGENOM" id="CLU_047363_0_1_14"/>
<dbReference type="Proteomes" id="UP000007065">
    <property type="component" value="Chromosome"/>
</dbReference>
<dbReference type="GO" id="GO:0005829">
    <property type="term" value="C:cytosol"/>
    <property type="evidence" value="ECO:0007669"/>
    <property type="project" value="TreeGrafter"/>
</dbReference>
<dbReference type="GO" id="GO:0052906">
    <property type="term" value="F:tRNA (guanine(37)-N1)-methyltransferase activity"/>
    <property type="evidence" value="ECO:0007669"/>
    <property type="project" value="UniProtKB-UniRule"/>
</dbReference>
<dbReference type="GO" id="GO:0002939">
    <property type="term" value="P:tRNA N1-guanine methylation"/>
    <property type="evidence" value="ECO:0007669"/>
    <property type="project" value="TreeGrafter"/>
</dbReference>
<dbReference type="CDD" id="cd18080">
    <property type="entry name" value="TrmD-like"/>
    <property type="match status" value="1"/>
</dbReference>
<dbReference type="FunFam" id="3.40.1280.10:FF:000001">
    <property type="entry name" value="tRNA (guanine-N(1)-)-methyltransferase"/>
    <property type="match status" value="1"/>
</dbReference>
<dbReference type="Gene3D" id="3.40.1280.10">
    <property type="match status" value="1"/>
</dbReference>
<dbReference type="Gene3D" id="1.10.1270.20">
    <property type="entry name" value="tRNA(m1g37)methyltransferase, domain 2"/>
    <property type="match status" value="1"/>
</dbReference>
<dbReference type="HAMAP" id="MF_00605">
    <property type="entry name" value="TrmD"/>
    <property type="match status" value="1"/>
</dbReference>
<dbReference type="InterPro" id="IPR029028">
    <property type="entry name" value="Alpha/beta_knot_MTases"/>
</dbReference>
<dbReference type="InterPro" id="IPR023148">
    <property type="entry name" value="tRNA_m1G_MeTrfase_C_sf"/>
</dbReference>
<dbReference type="InterPro" id="IPR002649">
    <property type="entry name" value="tRNA_m1G_MeTrfase_TrmD"/>
</dbReference>
<dbReference type="InterPro" id="IPR029026">
    <property type="entry name" value="tRNA_m1G_MTases_N"/>
</dbReference>
<dbReference type="InterPro" id="IPR016009">
    <property type="entry name" value="tRNA_MeTrfase_TRMD/TRM10"/>
</dbReference>
<dbReference type="NCBIfam" id="NF000648">
    <property type="entry name" value="PRK00026.1"/>
    <property type="match status" value="1"/>
</dbReference>
<dbReference type="NCBIfam" id="TIGR00088">
    <property type="entry name" value="trmD"/>
    <property type="match status" value="1"/>
</dbReference>
<dbReference type="PANTHER" id="PTHR46417">
    <property type="entry name" value="TRNA (GUANINE-N(1)-)-METHYLTRANSFERASE"/>
    <property type="match status" value="1"/>
</dbReference>
<dbReference type="PANTHER" id="PTHR46417:SF1">
    <property type="entry name" value="TRNA (GUANINE-N(1)-)-METHYLTRANSFERASE"/>
    <property type="match status" value="1"/>
</dbReference>
<dbReference type="Pfam" id="PF01746">
    <property type="entry name" value="tRNA_m1G_MT"/>
    <property type="match status" value="1"/>
</dbReference>
<dbReference type="PIRSF" id="PIRSF000386">
    <property type="entry name" value="tRNA_mtase"/>
    <property type="match status" value="1"/>
</dbReference>
<dbReference type="SUPFAM" id="SSF75217">
    <property type="entry name" value="alpha/beta knot"/>
    <property type="match status" value="1"/>
</dbReference>
<organism>
    <name type="scientific">Mycoplasmopsis agalactiae (strain NCTC 10123 / CIP 59.7 / PG2)</name>
    <name type="common">Mycoplasma agalactiae</name>
    <dbReference type="NCBI Taxonomy" id="347257"/>
    <lineage>
        <taxon>Bacteria</taxon>
        <taxon>Bacillati</taxon>
        <taxon>Mycoplasmatota</taxon>
        <taxon>Mycoplasmoidales</taxon>
        <taxon>Metamycoplasmataceae</taxon>
        <taxon>Mycoplasmopsis</taxon>
    </lineage>
</organism>
<protein>
    <recommendedName>
        <fullName evidence="1">tRNA (guanine-N(1)-)-methyltransferase</fullName>
        <ecNumber evidence="1">2.1.1.228</ecNumber>
    </recommendedName>
    <alternativeName>
        <fullName evidence="1">M1G-methyltransferase</fullName>
    </alternativeName>
    <alternativeName>
        <fullName evidence="1">tRNA [GM37] methyltransferase</fullName>
    </alternativeName>
</protein>
<feature type="chain" id="PRO_1000130189" description="tRNA (guanine-N(1)-)-methyltransferase">
    <location>
        <begin position="1"/>
        <end position="227"/>
    </location>
</feature>
<feature type="binding site" evidence="1">
    <location>
        <position position="110"/>
    </location>
    <ligand>
        <name>S-adenosyl-L-methionine</name>
        <dbReference type="ChEBI" id="CHEBI:59789"/>
    </ligand>
</feature>
<feature type="binding site" evidence="1">
    <location>
        <begin position="129"/>
        <end position="134"/>
    </location>
    <ligand>
        <name>S-adenosyl-L-methionine</name>
        <dbReference type="ChEBI" id="CHEBI:59789"/>
    </ligand>
</feature>
<name>TRMD_MYCAP</name>
<proteinExistence type="inferred from homology"/>
<comment type="function">
    <text evidence="1">Specifically methylates guanosine-37 in various tRNAs.</text>
</comment>
<comment type="catalytic activity">
    <reaction evidence="1">
        <text>guanosine(37) in tRNA + S-adenosyl-L-methionine = N(1)-methylguanosine(37) in tRNA + S-adenosyl-L-homocysteine + H(+)</text>
        <dbReference type="Rhea" id="RHEA:36899"/>
        <dbReference type="Rhea" id="RHEA-COMP:10145"/>
        <dbReference type="Rhea" id="RHEA-COMP:10147"/>
        <dbReference type="ChEBI" id="CHEBI:15378"/>
        <dbReference type="ChEBI" id="CHEBI:57856"/>
        <dbReference type="ChEBI" id="CHEBI:59789"/>
        <dbReference type="ChEBI" id="CHEBI:73542"/>
        <dbReference type="ChEBI" id="CHEBI:74269"/>
        <dbReference type="EC" id="2.1.1.228"/>
    </reaction>
</comment>
<comment type="subunit">
    <text evidence="1">Homodimer.</text>
</comment>
<comment type="subcellular location">
    <subcellularLocation>
        <location evidence="1">Cytoplasm</location>
    </subcellularLocation>
</comment>
<comment type="similarity">
    <text evidence="1">Belongs to the RNA methyltransferase TrmD family.</text>
</comment>
<sequence>MKINFLTLFPNYFSPFTEESIIAKAIENKLIDINIVDFRLFSLDKHHKVDDETYGGGQGMLLQIEPIDRALDSLESRGGYKILVSPQGKVFNQQKARELSKFDQITFISGRYEGFDERVTELVDEELSIGDYVLTGGELPSMVMADSIIRLIDNVIRKESHEYESFEGDGLLDYPQYTRPREYKGMSVPDVLLNGNHAEIEKWRKEAKYKKTLKNRPDIIERINHEK</sequence>